<sequence length="508" mass="55958">MGLPWYRVHTVVLNDPGRLLAVHIMHTALVAGWAGSMALYELAVFDPSDPVLDPMWRQGMFVIPFMTRLGITSSWGGWSITGGATPNPGIWSYEGVAGAHIVFSGLCFLAAIWHWTYWDLAIFCDERTGKPSLDLPKIFGIHLFLAGLACFGFGAFHVTGLYGPGIWVSDPYGLTGKVQSVNPAWGVEGFDPFVPGGIASHHIAAGTLGILAGLFHLSVRPPQRLYKGLRMGNIETVLSSSIAAVFFAAFVVAGTMWYGSATTPIELFGPTRYQWDQGYFQQEIYRRVSAGLAENQSLSEAWSKIPEKLAFYDYIGNNPAKGGLFRAGSMDNGDGIAVGWLGHPIFRDKEGRELFVRRMPTFFETFPVVLVDGDGIVRADVPFRRAESKYSVEQVGVTVEFYGGELNGVSYSDPATVKKYARRAQLGEIFELDRATLKSDGVFRSSPRGWFTFGHASFALLFFFGHIWHGARTLFRDVFAGIDPDLDAQVEFGAFQKLGDPTTRRQTV</sequence>
<protein>
    <recommendedName>
        <fullName evidence="1">Photosystem II CP47 reaction center protein</fullName>
    </recommendedName>
    <alternativeName>
        <fullName evidence="1">PSII 47 kDa protein</fullName>
    </alternativeName>
    <alternativeName>
        <fullName evidence="1">Protein CP-47</fullName>
    </alternativeName>
</protein>
<keyword id="KW-0148">Chlorophyll</keyword>
<keyword id="KW-0150">Chloroplast</keyword>
<keyword id="KW-0157">Chromophore</keyword>
<keyword id="KW-0472">Membrane</keyword>
<keyword id="KW-0602">Photosynthesis</keyword>
<keyword id="KW-0604">Photosystem II</keyword>
<keyword id="KW-0934">Plastid</keyword>
<keyword id="KW-0793">Thylakoid</keyword>
<keyword id="KW-0812">Transmembrane</keyword>
<keyword id="KW-1133">Transmembrane helix</keyword>
<evidence type="ECO:0000255" key="1">
    <source>
        <dbReference type="HAMAP-Rule" id="MF_01495"/>
    </source>
</evidence>
<comment type="function">
    <text evidence="1">One of the components of the core complex of photosystem II (PSII). It binds chlorophyll and helps catalyze the primary light-induced photochemical processes of PSII. PSII is a light-driven water:plastoquinone oxidoreductase, using light energy to abstract electrons from H(2)O, generating O(2) and a proton gradient subsequently used for ATP formation.</text>
</comment>
<comment type="cofactor">
    <text evidence="1">Binds multiple chlorophylls. PSII binds additional chlorophylls, carotenoids and specific lipids.</text>
</comment>
<comment type="subunit">
    <text evidence="1">PSII is composed of 1 copy each of membrane proteins PsbA, PsbB, PsbC, PsbD, PsbE, PsbF, PsbH, PsbI, PsbJ, PsbK, PsbL, PsbM, PsbT, PsbX, PsbY, PsbZ, Psb30/Ycf12, at least 3 peripheral proteins of the oxygen-evolving complex and a large number of cofactors. It forms dimeric complexes.</text>
</comment>
<comment type="subcellular location">
    <subcellularLocation>
        <location evidence="1">Plastid</location>
        <location evidence="1">Chloroplast thylakoid membrane</location>
        <topology evidence="1">Multi-pass membrane protein</topology>
    </subcellularLocation>
</comment>
<comment type="similarity">
    <text evidence="1">Belongs to the PsbB/PsbC family. PsbB subfamily.</text>
</comment>
<gene>
    <name evidence="1" type="primary">psbB</name>
</gene>
<dbReference type="EMBL" id="DQ898156">
    <property type="protein sequence ID" value="ABI32449.1"/>
    <property type="molecule type" value="Genomic_DNA"/>
</dbReference>
<dbReference type="RefSeq" id="YP_740143.1">
    <property type="nucleotide sequence ID" value="NC_008325.1"/>
</dbReference>
<dbReference type="SMR" id="Q0G9T6"/>
<dbReference type="GeneID" id="4266770"/>
<dbReference type="OMA" id="HNALCAG"/>
<dbReference type="GO" id="GO:0009535">
    <property type="term" value="C:chloroplast thylakoid membrane"/>
    <property type="evidence" value="ECO:0007669"/>
    <property type="project" value="UniProtKB-SubCell"/>
</dbReference>
<dbReference type="GO" id="GO:0009523">
    <property type="term" value="C:photosystem II"/>
    <property type="evidence" value="ECO:0007669"/>
    <property type="project" value="UniProtKB-KW"/>
</dbReference>
<dbReference type="GO" id="GO:0016168">
    <property type="term" value="F:chlorophyll binding"/>
    <property type="evidence" value="ECO:0007669"/>
    <property type="project" value="UniProtKB-UniRule"/>
</dbReference>
<dbReference type="GO" id="GO:0045156">
    <property type="term" value="F:electron transporter, transferring electrons within the cyclic electron transport pathway of photosynthesis activity"/>
    <property type="evidence" value="ECO:0007669"/>
    <property type="project" value="InterPro"/>
</dbReference>
<dbReference type="GO" id="GO:0009772">
    <property type="term" value="P:photosynthetic electron transport in photosystem II"/>
    <property type="evidence" value="ECO:0007669"/>
    <property type="project" value="InterPro"/>
</dbReference>
<dbReference type="FunFam" id="3.10.680.10:FF:000001">
    <property type="entry name" value="Photosystem II CP47 reaction center protein"/>
    <property type="match status" value="1"/>
</dbReference>
<dbReference type="Gene3D" id="3.10.680.10">
    <property type="entry name" value="Photosystem II CP47 reaction center protein"/>
    <property type="match status" value="1"/>
</dbReference>
<dbReference type="HAMAP" id="MF_01495">
    <property type="entry name" value="PSII_PsbB_CP47"/>
    <property type="match status" value="1"/>
</dbReference>
<dbReference type="InterPro" id="IPR000932">
    <property type="entry name" value="PS_antenna-like"/>
</dbReference>
<dbReference type="InterPro" id="IPR036001">
    <property type="entry name" value="PS_II_antenna-like_sf"/>
</dbReference>
<dbReference type="InterPro" id="IPR017486">
    <property type="entry name" value="PSII_PsbB"/>
</dbReference>
<dbReference type="NCBIfam" id="TIGR03039">
    <property type="entry name" value="PS_II_CP47"/>
    <property type="match status" value="1"/>
</dbReference>
<dbReference type="PANTHER" id="PTHR33180">
    <property type="entry name" value="PHOTOSYSTEM II CP43 REACTION CENTER PROTEIN"/>
    <property type="match status" value="1"/>
</dbReference>
<dbReference type="PANTHER" id="PTHR33180:SF38">
    <property type="entry name" value="PHOTOSYSTEM II CP47 REACTION CENTER PROTEIN"/>
    <property type="match status" value="1"/>
</dbReference>
<dbReference type="Pfam" id="PF00421">
    <property type="entry name" value="PSII"/>
    <property type="match status" value="1"/>
</dbReference>
<dbReference type="SUPFAM" id="SSF161077">
    <property type="entry name" value="Photosystem II antenna protein-like"/>
    <property type="match status" value="1"/>
</dbReference>
<proteinExistence type="inferred from homology"/>
<reference key="1">
    <citation type="journal article" date="2006" name="BMC Genomics">
        <title>Complete plastid genome sequence of Daucus carota: implications for biotechnology and phylogeny of angiosperms.</title>
        <authorList>
            <person name="Ruhlman T."/>
            <person name="Lee S.-B."/>
            <person name="Jansen R.K."/>
            <person name="Hostetler J.B."/>
            <person name="Tallon L.J."/>
            <person name="Town C.D."/>
            <person name="Daniell H."/>
        </authorList>
    </citation>
    <scope>NUCLEOTIDE SEQUENCE [LARGE SCALE GENOMIC DNA]</scope>
    <source>
        <strain>cv. Danvers Half-long</strain>
    </source>
</reference>
<feature type="chain" id="PRO_0000359818" description="Photosystem II CP47 reaction center protein">
    <location>
        <begin position="1"/>
        <end position="508"/>
    </location>
</feature>
<feature type="transmembrane region" description="Helical" evidence="1">
    <location>
        <begin position="21"/>
        <end position="36"/>
    </location>
</feature>
<feature type="transmembrane region" description="Helical" evidence="1">
    <location>
        <begin position="101"/>
        <end position="115"/>
    </location>
</feature>
<feature type="transmembrane region" description="Helical" evidence="1">
    <location>
        <begin position="140"/>
        <end position="156"/>
    </location>
</feature>
<feature type="transmembrane region" description="Helical" evidence="1">
    <location>
        <begin position="203"/>
        <end position="218"/>
    </location>
</feature>
<feature type="transmembrane region" description="Helical" evidence="1">
    <location>
        <begin position="237"/>
        <end position="252"/>
    </location>
</feature>
<feature type="transmembrane region" description="Helical" evidence="1">
    <location>
        <begin position="457"/>
        <end position="472"/>
    </location>
</feature>
<name>PSBB_DAUCA</name>
<accession>Q0G9T6</accession>
<organism>
    <name type="scientific">Daucus carota</name>
    <name type="common">Wild carrot</name>
    <dbReference type="NCBI Taxonomy" id="4039"/>
    <lineage>
        <taxon>Eukaryota</taxon>
        <taxon>Viridiplantae</taxon>
        <taxon>Streptophyta</taxon>
        <taxon>Embryophyta</taxon>
        <taxon>Tracheophyta</taxon>
        <taxon>Spermatophyta</taxon>
        <taxon>Magnoliopsida</taxon>
        <taxon>eudicotyledons</taxon>
        <taxon>Gunneridae</taxon>
        <taxon>Pentapetalae</taxon>
        <taxon>asterids</taxon>
        <taxon>campanulids</taxon>
        <taxon>Apiales</taxon>
        <taxon>Apiaceae</taxon>
        <taxon>Apioideae</taxon>
        <taxon>Scandiceae</taxon>
        <taxon>Daucinae</taxon>
        <taxon>Daucus</taxon>
        <taxon>Daucus sect. Daucus</taxon>
    </lineage>
</organism>
<geneLocation type="chloroplast"/>